<proteinExistence type="evidence at protein level"/>
<organism>
    <name type="scientific">Heteractis magnifica</name>
    <name type="common">Magnificent sea anemone</name>
    <name type="synonym">Radianthus magnifica</name>
    <dbReference type="NCBI Taxonomy" id="38281"/>
    <lineage>
        <taxon>Eukaryota</taxon>
        <taxon>Metazoa</taxon>
        <taxon>Cnidaria</taxon>
        <taxon>Anthozoa</taxon>
        <taxon>Hexacorallia</taxon>
        <taxon>Actiniaria</taxon>
        <taxon>Stichodactylidae</taxon>
        <taxon>Heteractis</taxon>
    </lineage>
</organism>
<evidence type="ECO:0000250" key="1">
    <source>
        <dbReference type="UniProtKB" id="C0HL54"/>
    </source>
</evidence>
<evidence type="ECO:0000250" key="2">
    <source>
        <dbReference type="UniProtKB" id="P61541"/>
    </source>
</evidence>
<evidence type="ECO:0000269" key="3">
    <source>
    </source>
</evidence>
<evidence type="ECO:0000269" key="4">
    <source>
    </source>
</evidence>
<evidence type="ECO:0000303" key="5">
    <source>
    </source>
</evidence>
<evidence type="ECO:0000305" key="6"/>
<dbReference type="Gene3D" id="2.20.20.10">
    <property type="entry name" value="Anthopleurin-A"/>
    <property type="match status" value="1"/>
</dbReference>
<dbReference type="InterPro" id="IPR012414">
    <property type="entry name" value="BDS_K_chnl_tox"/>
</dbReference>
<dbReference type="InterPro" id="IPR023355">
    <property type="entry name" value="Myo_ane_neurotoxin_sf"/>
</dbReference>
<dbReference type="Pfam" id="PF07936">
    <property type="entry name" value="Defensin_4"/>
    <property type="match status" value="1"/>
</dbReference>
<dbReference type="SUPFAM" id="SSF57392">
    <property type="entry name" value="Defensin-like"/>
    <property type="match status" value="1"/>
</dbReference>
<comment type="function">
    <text evidence="1 3 4">Toxin with different activities on acid-sensing ion channels (ASIC) and nicotinic acetylcholine receptors (By similarity) (PubMed:36287966). Is able to bind T.californica muscle-type nicotinic acetylcholine receptors (nAChR) (alpha-1-beta-1-delta-epsilon (CHRNA1-CHRNB1-CHRND-CHRNE)), and human alpha-7/CHRNA7 nicotinic acetylcholine receptors (PubMed:36287966). Weakly and reversibly inhibits rat homomeric ASIC1 (isoform ASIC1a) (IC(50)=1.25 uM), while it potentiates rat homomeric ASIC3 (EC(50)=1.53 uM) (By similarity) (PubMed:37235375). Rat ASIC1a current inhibition is not complete, and reaches a maximum of 86% inhibition (By similarity). On rat ASIC3, does not activate the channel itself, but produces a remarkable potentiation of the transient current resulting from the acidic pulse (By similarity). At the maximal applied concentration, elicits responses that are twice as high as those produced by extracellular protons (By similarity). Surprisingly, shows a different activity on human ASIC3. On the truncated human ASIC3 (ASIC3-D20), the toxin weakly inhibits the channel (PubMed:37235375). Molecular modeling interaction with rat ASIC1a suggests that it hinders the collapse of acidic pockets and stabilizes nonconducting channels state (By similarity). In vivo, causes an anxiolytic effect on mouse behavior (PubMed:37235375). Also shows an analgesic activity in an acid-induced muscle pain model, and important anti-inflammatory effect in models of acute local inflammation (PubMed:37235375).</text>
</comment>
<comment type="subcellular location">
    <subcellularLocation>
        <location evidence="3">Secreted</location>
    </subcellularLocation>
    <subcellularLocation>
        <location evidence="6">Nematocyst</location>
    </subcellularLocation>
</comment>
<comment type="mass spectrometry" mass="4693.96" method="MALDI" evidence="3">
    <text>Monoisotopic mass.</text>
</comment>
<comment type="miscellaneous">
    <text evidence="6">A synonymy between H.magnifica and R.crispa is controversial.</text>
</comment>
<comment type="miscellaneous">
    <text evidence="6">The primary structure of this peptide is identical to Hcr 1b-4 from Radianthus crispa (AC C0HL54).</text>
</comment>
<comment type="similarity">
    <text evidence="6">Belongs to the sea anemone type 3 (BDS) potassium channel toxin family.</text>
</comment>
<reference key="1">
    <citation type="journal article" date="2022" name="Toxins">
        <title>Nicotinic acetylcholine receptors are novel targets of APETx-like toxins from the sea anemone Heteractis magnifica.</title>
        <authorList>
            <person name="Kalina R.S."/>
            <person name="Kasheverov I.E."/>
            <person name="Koshelev S.G."/>
            <person name="Sintsova O.V."/>
            <person name="Peigneur S."/>
            <person name="Pinheiro-Junior E.L."/>
            <person name="Popov R.S."/>
            <person name="Chausova V.E."/>
            <person name="Monastyrnaya M.M."/>
            <person name="Dmitrenok P.S."/>
            <person name="Isaeva M.P."/>
            <person name="Tytgat J."/>
            <person name="Kozlov S.A."/>
            <person name="Kozlovskaya E.P."/>
            <person name="Leychenko E.V."/>
            <person name="Gladkikh I.N."/>
        </authorList>
    </citation>
    <scope>NUCLEOTIDE SEQUENCE [MRNA]</scope>
    <scope>PROTEIN SEQUENCE</scope>
    <scope>IDENTIFICATION BY MASS SPECTROMETRY</scope>
    <scope>SUBCELLULAR LOCATION</scope>
</reference>
<reference key="2">
    <citation type="journal article" date="2023" name="Toxins">
        <title>Anxiolytic, analgesic and anti-inflammatory effects of peptides Hmg 1b-2 and Hmg 1b-4 from the sea anemone Heteractis magnifica.</title>
        <authorList>
            <person name="Gladkikh I.N."/>
            <person name="Klimovich A.A."/>
            <person name="Kalina R.S."/>
            <person name="Kozhevnikova Y.V."/>
            <person name="Khasanov T.A."/>
            <person name="Osmakov D.I."/>
            <person name="Koshelev S.G."/>
            <person name="Monastyrnaya M.M."/>
            <person name="Andreev Y.A."/>
            <person name="Leychenko E.V."/>
            <person name="Kozlov S.A."/>
        </authorList>
    </citation>
    <scope>FUNCTION</scope>
    <scope>RECOMBINANT EXPRESSION</scope>
    <scope>BIOASSAY</scope>
</reference>
<feature type="peptide" id="PRO_0000462190" description="Pi-stichotoxin-Hmg5c" evidence="3">
    <location>
        <begin position="1"/>
        <end position="41"/>
    </location>
</feature>
<feature type="disulfide bond" evidence="2">
    <location>
        <begin position="4"/>
        <end position="37"/>
    </location>
</feature>
<feature type="disulfide bond" evidence="2">
    <location>
        <begin position="6"/>
        <end position="30"/>
    </location>
</feature>
<feature type="disulfide bond" evidence="2">
    <location>
        <begin position="20"/>
        <end position="38"/>
    </location>
</feature>
<keyword id="KW-0008">Acetylcholine receptor inhibiting toxin</keyword>
<keyword id="KW-0903">Direct protein sequencing</keyword>
<keyword id="KW-1015">Disulfide bond</keyword>
<keyword id="KW-0872">Ion channel impairing toxin</keyword>
<keyword id="KW-0166">Nematocyst</keyword>
<keyword id="KW-0528">Neurotoxin</keyword>
<keyword id="KW-0629">Postsynaptic neurotoxin</keyword>
<keyword id="KW-1275">Proton-gated sodium channel impairing toxin</keyword>
<keyword id="KW-0964">Secreted</keyword>
<keyword id="KW-0800">Toxin</keyword>
<protein>
    <recommendedName>
        <fullName evidence="6">Pi-stichotoxin-Hmg5c</fullName>
        <shortName evidence="6">Pi-SHTX-Hmg5c</shortName>
    </recommendedName>
    <alternativeName>
        <fullName evidence="1">APETx-like peptide</fullName>
    </alternativeName>
    <alternativeName>
        <fullName evidence="5">Hmg 1b-4</fullName>
    </alternativeName>
</protein>
<accession>P0DRI4</accession>
<name>BDSB4_HETMG</name>
<sequence length="41" mass="4703">GTPCDCYGYTGVYWFMLSRCPSGYGYNLSCHYFMGICCVKR</sequence>